<reference key="1">
    <citation type="journal article" date="2000" name="AIDS Res. Hum. Retroviruses">
        <title>Near-full-length genome sequencing of divergent African HIV type 1 subtype F viruses leads to the identification of a new HIV type 1 subtype designated K.</title>
        <authorList>
            <person name="Triques K."/>
            <person name="Bourgeois A."/>
            <person name="Vidale N."/>
            <person name="Mpoudi-Ngole E."/>
            <person name="Mulanga-Kabeya C."/>
            <person name="Nzilambi N."/>
            <person name="Torimiro N."/>
            <person name="Saman E."/>
            <person name="Delaporte E."/>
            <person name="Peeters M."/>
        </authorList>
    </citation>
    <scope>NUCLEOTIDE SEQUENCE [GENOMIC RNA]</scope>
</reference>
<reference key="2">
    <citation type="journal article" date="2003" name="APMIS">
        <title>Pathogens target DC-SIGN to influence their fate DC-SIGN functions as a pathogen receptor with broad specificity.</title>
        <authorList>
            <person name="Geijtenbeek T.B."/>
            <person name="van Kooyk Y."/>
        </authorList>
    </citation>
    <scope>REVIEW</scope>
</reference>
<reference key="3">
    <citation type="journal article" date="2003" name="Biochim. Biophys. Acta">
        <title>The HIV Env-mediated fusion reaction.</title>
        <authorList>
            <person name="Gallo S.A."/>
            <person name="Finnegan C.M."/>
            <person name="Viard M."/>
            <person name="Raviv Y."/>
            <person name="Dimitrov A."/>
            <person name="Rawat S.S."/>
            <person name="Puri A."/>
            <person name="Durell S."/>
            <person name="Blumenthal R."/>
        </authorList>
    </citation>
    <scope>REVIEW</scope>
</reference>
<reference key="4">
    <citation type="journal article" date="2005" name="Cell Death Differ.">
        <title>Mechanisms of apoptosis induction by the HIV-1 envelope.</title>
        <authorList>
            <person name="Perfettini J.-L."/>
            <person name="Castedo M."/>
            <person name="Roumier T."/>
            <person name="Andreau K."/>
            <person name="Nardacci R."/>
            <person name="Piacentini M."/>
            <person name="Kroemer G."/>
        </authorList>
    </citation>
    <scope>REVIEW</scope>
</reference>
<reference key="5">
    <citation type="journal article" date="2005" name="AIDS Res. Hum. Retroviruses">
        <title>V3: HIV's switch-hitter.</title>
        <authorList>
            <person name="Hartley O."/>
            <person name="Klasse P.J."/>
            <person name="Sattentau Q.J."/>
            <person name="Moore J.P."/>
        </authorList>
    </citation>
    <scope>REVIEW</scope>
</reference>
<reference key="6">
    <citation type="journal article" date="2005" name="Drugs">
        <title>Emerging drug targets for antiretroviral therapy.</title>
        <authorList>
            <person name="Reeves J.D."/>
            <person name="Piefer A.J."/>
        </authorList>
    </citation>
    <scope>REVIEW</scope>
</reference>
<reference key="7">
    <citation type="journal article" date="2006" name="EMBO J.">
        <title>HIV and the chemokine system: 10 years later.</title>
        <authorList>
            <person name="Lusso P."/>
        </authorList>
    </citation>
    <scope>REVIEW</scope>
</reference>
<keyword id="KW-0014">AIDS</keyword>
<keyword id="KW-0053">Apoptosis</keyword>
<keyword id="KW-1165">Clathrin-mediated endocytosis of virus by host</keyword>
<keyword id="KW-0165">Cleavage on pair of basic residues</keyword>
<keyword id="KW-0175">Coiled coil</keyword>
<keyword id="KW-1015">Disulfide bond</keyword>
<keyword id="KW-1170">Fusion of virus membrane with host endosomal membrane</keyword>
<keyword id="KW-1168">Fusion of virus membrane with host membrane</keyword>
<keyword id="KW-0325">Glycoprotein</keyword>
<keyword id="KW-1032">Host cell membrane</keyword>
<keyword id="KW-1039">Host endosome</keyword>
<keyword id="KW-1043">Host membrane</keyword>
<keyword id="KW-0945">Host-virus interaction</keyword>
<keyword id="KW-0449">Lipoprotein</keyword>
<keyword id="KW-0472">Membrane</keyword>
<keyword id="KW-0564">Palmitate</keyword>
<keyword id="KW-0732">Signal</keyword>
<keyword id="KW-0812">Transmembrane</keyword>
<keyword id="KW-1133">Transmembrane helix</keyword>
<keyword id="KW-1161">Viral attachment to host cell</keyword>
<keyword id="KW-0261">Viral envelope protein</keyword>
<keyword id="KW-0899">Viral immunoevasion</keyword>
<keyword id="KW-1162">Viral penetration into host cytoplasm</keyword>
<keyword id="KW-0946">Virion</keyword>
<keyword id="KW-1164">Virus endocytosis by host</keyword>
<keyword id="KW-1160">Virus entry into host cell</keyword>
<evidence type="ECO:0000255" key="1">
    <source>
        <dbReference type="HAMAP-Rule" id="MF_04083"/>
    </source>
</evidence>
<evidence type="ECO:0000256" key="2">
    <source>
        <dbReference type="SAM" id="MobiDB-lite"/>
    </source>
</evidence>
<name>ENV_HV1MP</name>
<accession>Q9QBZ4</accession>
<organismHost>
    <name type="scientific">Homo sapiens</name>
    <name type="common">Human</name>
    <dbReference type="NCBI Taxonomy" id="9606"/>
</organismHost>
<sequence length="843" mass="95678">MRVREMQRNWQHLGKWGLLFLGILIICNANATDDLWVTVYYGVPVWKEPTTTLFCASDAKAYDPEVHNVWATYACVPTDPNPQELVLGNVTENFNMWENNMVDQMHLDIISLWDQSLKPCVKSTPLCVTLNCTDVNITMSDINGTSLKEDQGEIKNCSFNVTTELKDKKRKQQALFYRLDVEPIKNSSNIYKLISCNMSTVTQACPKVSFDPIPIHYCAPAGYAILKCNDKRFNGTGPCEKVSTVQCTHGIRPVVSTQLLLNGSLAQEDIIIRSKNITDNTKNIIVQFNRSVIIDCRRPNNNTRKGIRIGPGQTFFATGEIIGDIRKAYCNINRTLWNETLKNVSGEFKKHFNFSVAFNSSSGGDVEITTHSFNCRGEFFYYNTSGLFNETEVANNTNENITLPCRIRQFVNMWQRIGRAMYAPPIEGEIQCTSNITGLLLTRDGSKDIDGKEILRPIGGDMRDNWRSELYKYKVVRIEPVGVAPTKAKRRVVQRAKRAVGMGAVLFGFLGAAGSTMGAAAITLTAQARQLLSGIVQQQSNLLKAIEAQQHLLQLTVWGIKQLQARILAVERYLKDQQLLGIWGCSGKLICTTNVRWNSSWSNKSYDDIWDNMTWMQWEKEIDNYTKTIYSLIEDAQNQQERNEQELLALDKWDSLWSWFSITNWLWYIKIFIMIVGGLIGLRIVFAVLSVVNRVRQGYSPLSLQTLIPNPRGPDRPGGIEEEGGEPDRDRSMRLVSGFLPLTWDDLRSLCSFSYRHLRDLLLIAARTVDRGVKGGWEALKYLWNLTQHWGRELKNSAISLFDTIAIAVAEGTDRIIEVLQRAGRAVLHIPRRIRQGAERFLL</sequence>
<comment type="function">
    <molecule>Envelope glycoprotein gp160</molecule>
    <text evidence="1">Oligomerizes in the host endoplasmic reticulum into predominantly trimers. In a second time, gp160 transits in the host Golgi, where glycosylation is completed. The precursor is then proteolytically cleaved in the trans-Golgi and thereby activated by cellular furin or furin-like proteases to produce gp120 and gp41.</text>
</comment>
<comment type="function">
    <molecule>Surface protein gp120</molecule>
    <text evidence="1">Attaches the virus to the host lymphoid cell by binding to the primary receptor CD4. This interaction induces a structural rearrangement creating a high affinity binding site for a chemokine coreceptor like CXCR4 and/or CCR5. Acts as a ligand for CD209/DC-SIGN and CLEC4M/DC-SIGNR, which are respectively found on dendritic cells (DCs), and on endothelial cells of liver sinusoids and lymph node sinuses. These interactions allow capture of viral particles at mucosal surfaces by these cells and subsequent transmission to permissive cells. HIV subverts the migration properties of dendritic cells to gain access to CD4+ T-cells in lymph nodes. Virus transmission to permissive T-cells occurs either in trans (without DCs infection, through viral capture and transmission), or in cis (following DCs productive infection, through the usual CD4-gp120 interaction), thereby inducing a robust infection. In trans infection, bound virions remain infectious over days and it is proposed that they are not degraded, but protected in non-lysosomal acidic organelles within the DCs close to the cell membrane thus contributing to the viral infectious potential during DCs' migration from the periphery to the lymphoid tissues. On arrival at lymphoid tissues, intact virions recycle back to DCs' cell surface allowing virus transmission to CD4+ T-cells.</text>
</comment>
<comment type="function">
    <molecule>Transmembrane protein gp41</molecule>
    <text evidence="1">Acts as a class I viral fusion protein. Under the current model, the protein has at least 3 conformational states: pre-fusion native state, pre-hairpin intermediate state, and post-fusion hairpin state. During fusion of viral and target intracellular membranes, the coiled coil regions (heptad repeats) assume a trimer-of-hairpins structure, positioning the fusion peptide in close proximity to the C-terminal region of the ectodomain. The formation of this structure appears to drive apposition and subsequent fusion of viral and target cell membranes. Complete fusion occurs in host cell endosomes and is dynamin-dependent, however some lipid transfer might occur at the plasma membrane. The virus undergoes clathrin-dependent internalization long before endosomal fusion, thus minimizing the surface exposure of conserved viral epitopes during fusion and reducing the efficacy of inhibitors targeting these epitopes. Membranes fusion leads to delivery of the nucleocapsid into the cytoplasm.</text>
</comment>
<comment type="subunit">
    <molecule>Surface protein gp120</molecule>
    <text evidence="1">The mature envelope protein (Env) consists of a homotrimer of non-covalently associated gp120-gp41 heterodimers. The resulting complex protrudes from the virus surface as a spike. There seems to be as few as 10 spikes on the average virion. Interacts with host CD4, CCR5 and CXCR4. Gp120 also interacts with the C-type lectins CD209/DC-SIGN and CLEC4M/DC-SIGNR (collectively referred to as DC-SIGN(R)). Gp120 and gp41 interact with GalCer. Gp120 interacts with host ITGA4/ITGB7 complex; on CD4+ T-cells, this interaction results in rapid activation of integrin ITGAL/LFA-1, which facilitates efficient cell-to-cell spreading of HIV-1. Gp120 interacts with cell-associated heparan sulfate; this interaction increases virus infectivity on permissive cells and may be involved in infection of CD4- cells.</text>
</comment>
<comment type="subunit">
    <molecule>Transmembrane protein gp41</molecule>
    <text evidence="1">The mature envelope protein (Env) consists of a homotrimer of non-covalently associated gp120-gp41 heterodimers. The resulting complex protrudes from the virus surface as a spike. There seems to be as few as 10 spikes on the average virion.</text>
</comment>
<comment type="subcellular location">
    <molecule>Surface protein gp120</molecule>
    <subcellularLocation>
        <location evidence="1">Virion membrane</location>
        <topology evidence="1">Peripheral membrane protein</topology>
    </subcellularLocation>
    <subcellularLocation>
        <location evidence="1">Host cell membrane</location>
        <topology evidence="1">Peripheral membrane protein</topology>
    </subcellularLocation>
    <subcellularLocation>
        <location evidence="1">Host endosome membrane</location>
        <topology evidence="1">Single-pass type I membrane protein</topology>
    </subcellularLocation>
    <text evidence="1">The surface protein is not anchored to the viral envelope, but associates with the extravirion surface through its binding to TM. It is probably concentrated at the site of budding and incorporated into the virions possibly by contacts between the cytoplasmic tail of Env and the N-terminus of Gag.</text>
</comment>
<comment type="subcellular location">
    <molecule>Transmembrane protein gp41</molecule>
    <subcellularLocation>
        <location evidence="1">Virion membrane</location>
        <topology evidence="1">Single-pass type I membrane protein</topology>
    </subcellularLocation>
    <subcellularLocation>
        <location evidence="1">Host cell membrane</location>
        <topology evidence="1">Single-pass type I membrane protein</topology>
    </subcellularLocation>
    <subcellularLocation>
        <location evidence="1">Host endosome membrane</location>
        <topology evidence="1">Single-pass type I membrane protein</topology>
    </subcellularLocation>
    <text evidence="1">It is probably concentrated at the site of budding and incorporated into the virions possibly by contacts between the cytoplasmic tail of Env and the N-terminus of Gag.</text>
</comment>
<comment type="domain">
    <text evidence="1">Some of the most genetically diverse regions of the viral genome are present in Env. They are called variable regions 1 through 5 (V1 through V5). Coreceptor usage of gp120 is determined mainly by the primary structure of the third variable region (V3) in the outer domain of gp120. The sequence of V3 determines which coreceptor, CCR5 and/or CXCR4 (corresponding to R5/macrophage, X4/T cell and R5X4/T cell and macrophage tropism), is used to trigger the fusion potential of the Env complex, and hence which cells the virus can infect. Binding to CCR5 involves a region adjacent in addition to V3.</text>
</comment>
<comment type="domain">
    <text evidence="1">The membrane proximal external region (MPER) present in gp41 is a tryptophan-rich region recognized by the antibodies 2F5, Z13, and 4E10. MPER seems to play a role in fusion.</text>
</comment>
<comment type="domain">
    <text evidence="1">The 17 amino acids long immunosuppressive region is present in many retroviral envelope proteins. Synthetic peptides derived from this relatively conserved sequence inhibit immune function in vitro and in vivo.</text>
</comment>
<comment type="domain">
    <text evidence="1">The YXXL motif is involved in determining the exact site of viral release at the surface of infected mononuclear cells and promotes endocytosis. YXXL and di-leucine endocytosis motifs interact directly or indirectly with the clathrin adapter complexes, opperate independently, and their activities are not additive.</text>
</comment>
<comment type="domain">
    <text evidence="1">The CD4-binding region is targeted by the antibody b12.</text>
</comment>
<comment type="PTM">
    <text evidence="1">Highly glycosylated by host. The high number of glycan on the protein is reffered to as 'glycan shield' because it contributes to hide protein sequence from adaptive immune system.</text>
</comment>
<comment type="PTM">
    <text evidence="1">Palmitoylation of the transmembrane protein and of Env polyprotein (prior to its proteolytic cleavage) is essential for their association with host cell membrane lipid rafts. Palmitoylation is therefore required for envelope trafficking to classical lipid rafts, but not for viral replication.</text>
</comment>
<comment type="PTM">
    <text evidence="1">Specific enzymatic cleavages in vivo yield mature proteins. Envelope glycoproteins are synthesized as an inactive precursor that is heavily N-glycosylated and processed likely by host cell furin in the Golgi to yield the mature SU and TM proteins. The cleavage site between SU and TM requires the minimal sequence [KR]-X-[KR]-R. About 2 of the 9 disulfide bonds of gp41 are reduced by P4HB/PDI, following binding to CD4 receptor.</text>
</comment>
<comment type="miscellaneous">
    <text evidence="1">Inhibitors targeting HIV-1 viral envelope proteins are used as antiretroviral drugs. Attachment of virions to the cell surface via non-specific interactions and CD4 binding can be blocked by inhibitors that include cyanovirin-N, cyclotriazadisulfonamide analogs, PRO 2000, TNX 355 and PRO 542. In addition, BMS 806 can block CD4-induced conformational changes. Env interactions with the coreceptor molecules can be targeted by CCR5 antagonists including SCH-D, maraviroc (UK 427857) and aplaviroc (GW 873140), and the CXCR4 antagonist AMD 070. Fusion of viral and cellular membranes can be inhibited by peptides such as enfuvirtide and tifuvirtide (T 1249). Resistance to inhibitors associated with mutations in Env are observed. Most of the time, single mutations confer only a modest reduction in drug susceptibility. Combination of several mutations is usually required to develop a high-level drug resistance.</text>
</comment>
<comment type="miscellaneous">
    <text evidence="1">HIV-1 lineages are divided in three main groups, M (for Major), O (for Outlier), and N (for New, or Non-M, Non-O). The vast majority of strains found worldwide belong to the group M. Group O seems to be endemic to and largely confined to Cameroon and neighboring countries in West Central Africa, where these viruses represent a small minority of HIV-1 strains. The group N is represented by a limited number of isolates from Cameroonian persons. The group M is further subdivided in 9 clades or subtypes (A to D, F to H, J and K).</text>
</comment>
<comment type="similarity">
    <text evidence="1">Belongs to the HIV-1 env protein family.</text>
</comment>
<comment type="sequence caution">
    <conflict type="erroneous initiation">
        <sequence resource="EMBL-CDS" id="CAB58978"/>
    </conflict>
</comment>
<comment type="online information" name="hivdb">
    <link uri="https://hivdb.stanford.edu"/>
    <text>HIV drug resistance database</text>
</comment>
<comment type="online information" name="HIV drug resistance mutations">
    <link uri="https://www.iasusa.org/hiv-drug-resistance/hiv-drug-resistance-mutations/"/>
</comment>
<proteinExistence type="inferred from homology"/>
<protein>
    <recommendedName>
        <fullName evidence="1">Envelope glycoprotein gp160</fullName>
    </recommendedName>
    <alternativeName>
        <fullName evidence="1">Env polyprotein</fullName>
    </alternativeName>
    <component>
        <recommendedName>
            <fullName evidence="1">Surface protein gp120</fullName>
            <shortName evidence="1">SU</shortName>
        </recommendedName>
        <alternativeName>
            <fullName evidence="1">Glycoprotein 120</fullName>
            <shortName evidence="1">gp120</shortName>
        </alternativeName>
    </component>
    <component>
        <recommendedName>
            <fullName evidence="1">Transmembrane protein gp41</fullName>
            <shortName evidence="1">TM</shortName>
        </recommendedName>
        <alternativeName>
            <fullName evidence="1">Glycoprotein 41</fullName>
            <shortName evidence="1">gp41</shortName>
        </alternativeName>
    </component>
</protein>
<organism>
    <name type="scientific">Human immunodeficiency virus type 1 group M subtype F2 (isolate MP255)</name>
    <name type="common">HIV-1</name>
    <dbReference type="NCBI Taxonomy" id="388815"/>
    <lineage>
        <taxon>Viruses</taxon>
        <taxon>Riboviria</taxon>
        <taxon>Pararnavirae</taxon>
        <taxon>Artverviricota</taxon>
        <taxon>Revtraviricetes</taxon>
        <taxon>Ortervirales</taxon>
        <taxon>Retroviridae</taxon>
        <taxon>Orthoretrovirinae</taxon>
        <taxon>Lentivirus</taxon>
        <taxon>Human immunodeficiency virus type 1</taxon>
    </lineage>
</organism>
<dbReference type="EMBL" id="AJ249236">
    <property type="protein sequence ID" value="CAB58978.1"/>
    <property type="status" value="ALT_INIT"/>
    <property type="molecule type" value="Genomic_RNA"/>
</dbReference>
<dbReference type="SMR" id="Q9QBZ4"/>
<dbReference type="GlyCosmos" id="Q9QBZ4">
    <property type="glycosylation" value="28 sites, No reported glycans"/>
</dbReference>
<dbReference type="Proteomes" id="UP000120463">
    <property type="component" value="Segment"/>
</dbReference>
<dbReference type="GO" id="GO:0044175">
    <property type="term" value="C:host cell endosome membrane"/>
    <property type="evidence" value="ECO:0007669"/>
    <property type="project" value="UniProtKB-SubCell"/>
</dbReference>
<dbReference type="GO" id="GO:0020002">
    <property type="term" value="C:host cell plasma membrane"/>
    <property type="evidence" value="ECO:0007669"/>
    <property type="project" value="UniProtKB-SubCell"/>
</dbReference>
<dbReference type="GO" id="GO:0016020">
    <property type="term" value="C:membrane"/>
    <property type="evidence" value="ECO:0007669"/>
    <property type="project" value="UniProtKB-UniRule"/>
</dbReference>
<dbReference type="GO" id="GO:0019031">
    <property type="term" value="C:viral envelope"/>
    <property type="evidence" value="ECO:0007669"/>
    <property type="project" value="UniProtKB-KW"/>
</dbReference>
<dbReference type="GO" id="GO:0055036">
    <property type="term" value="C:virion membrane"/>
    <property type="evidence" value="ECO:0007669"/>
    <property type="project" value="UniProtKB-SubCell"/>
</dbReference>
<dbReference type="GO" id="GO:0005198">
    <property type="term" value="F:structural molecule activity"/>
    <property type="evidence" value="ECO:0007669"/>
    <property type="project" value="UniProtKB-UniRule"/>
</dbReference>
<dbReference type="GO" id="GO:0075512">
    <property type="term" value="P:clathrin-dependent endocytosis of virus by host cell"/>
    <property type="evidence" value="ECO:0007669"/>
    <property type="project" value="UniProtKB-UniRule"/>
</dbReference>
<dbReference type="GO" id="GO:0039654">
    <property type="term" value="P:fusion of virus membrane with host endosome membrane"/>
    <property type="evidence" value="ECO:0007669"/>
    <property type="project" value="UniProtKB-UniRule"/>
</dbReference>
<dbReference type="GO" id="GO:0019064">
    <property type="term" value="P:fusion of virus membrane with host plasma membrane"/>
    <property type="evidence" value="ECO:0007669"/>
    <property type="project" value="UniProtKB-UniRule"/>
</dbReference>
<dbReference type="GO" id="GO:1903908">
    <property type="term" value="P:positive regulation of plasma membrane raft polarization"/>
    <property type="evidence" value="ECO:0007669"/>
    <property type="project" value="UniProtKB-UniRule"/>
</dbReference>
<dbReference type="GO" id="GO:1903911">
    <property type="term" value="P:positive regulation of receptor clustering"/>
    <property type="evidence" value="ECO:0007669"/>
    <property type="project" value="UniProtKB-UniRule"/>
</dbReference>
<dbReference type="GO" id="GO:0019082">
    <property type="term" value="P:viral protein processing"/>
    <property type="evidence" value="ECO:0007669"/>
    <property type="project" value="UniProtKB-UniRule"/>
</dbReference>
<dbReference type="GO" id="GO:0019062">
    <property type="term" value="P:virion attachment to host cell"/>
    <property type="evidence" value="ECO:0007669"/>
    <property type="project" value="UniProtKB-UniRule"/>
</dbReference>
<dbReference type="CDD" id="cd09909">
    <property type="entry name" value="HIV-1-like_HR1-HR2"/>
    <property type="match status" value="1"/>
</dbReference>
<dbReference type="FunFam" id="1.10.287.210:FF:000001">
    <property type="entry name" value="Envelope glycoprotein gp160"/>
    <property type="match status" value="1"/>
</dbReference>
<dbReference type="FunFam" id="1.20.5.490:FF:000001">
    <property type="entry name" value="Envelope glycoprotein gp160"/>
    <property type="match status" value="1"/>
</dbReference>
<dbReference type="FunFam" id="2.170.40.20:FF:000003">
    <property type="entry name" value="Envelope glycoprotein gp160"/>
    <property type="match status" value="1"/>
</dbReference>
<dbReference type="FunFam" id="2.170.40.20:FF:000004">
    <property type="entry name" value="Envelope glycoprotein gp160"/>
    <property type="match status" value="1"/>
</dbReference>
<dbReference type="Gene3D" id="1.10.287.210">
    <property type="match status" value="1"/>
</dbReference>
<dbReference type="Gene3D" id="2.170.40.20">
    <property type="entry name" value="Human immunodeficiency virus 1, Gp160, envelope glycoprotein"/>
    <property type="match status" value="2"/>
</dbReference>
<dbReference type="Gene3D" id="1.20.5.490">
    <property type="entry name" value="Single helix bin"/>
    <property type="match status" value="1"/>
</dbReference>
<dbReference type="HAMAP" id="MF_04083">
    <property type="entry name" value="HIV_ENV"/>
    <property type="match status" value="1"/>
</dbReference>
<dbReference type="InterPro" id="IPR036377">
    <property type="entry name" value="Gp120_core_sf"/>
</dbReference>
<dbReference type="InterPro" id="IPR037527">
    <property type="entry name" value="Gp160"/>
</dbReference>
<dbReference type="InterPro" id="IPR000328">
    <property type="entry name" value="GP41-like"/>
</dbReference>
<dbReference type="InterPro" id="IPR000777">
    <property type="entry name" value="HIV1_Gp120"/>
</dbReference>
<dbReference type="Pfam" id="PF00516">
    <property type="entry name" value="GP120"/>
    <property type="match status" value="2"/>
</dbReference>
<dbReference type="Pfam" id="PF00517">
    <property type="entry name" value="GP41"/>
    <property type="match status" value="1"/>
</dbReference>
<dbReference type="SUPFAM" id="SSF56502">
    <property type="entry name" value="gp120 core"/>
    <property type="match status" value="2"/>
</dbReference>
<dbReference type="SUPFAM" id="SSF58069">
    <property type="entry name" value="Virus ectodomain"/>
    <property type="match status" value="1"/>
</dbReference>
<gene>
    <name evidence="1" type="primary">env</name>
</gene>
<feature type="signal peptide" evidence="1">
    <location>
        <begin position="1"/>
        <end position="33"/>
    </location>
</feature>
<feature type="chain" id="PRO_0000244675" description="Envelope glycoprotein gp160" evidence="1">
    <location>
        <begin position="34"/>
        <end position="843"/>
    </location>
</feature>
<feature type="chain" id="PRO_0000244676" description="Surface protein gp120" evidence="1">
    <location>
        <begin position="34"/>
        <end position="498"/>
    </location>
</feature>
<feature type="chain" id="PRO_0000244677" description="Transmembrane protein gp41" evidence="1">
    <location>
        <begin position="499"/>
        <end position="843"/>
    </location>
</feature>
<feature type="topological domain" description="Extracellular" evidence="1">
    <location>
        <begin position="34"/>
        <end position="671"/>
    </location>
</feature>
<feature type="transmembrane region" description="Helical" evidence="1">
    <location>
        <begin position="672"/>
        <end position="692"/>
    </location>
</feature>
<feature type="topological domain" description="Cytoplasmic" evidence="1">
    <location>
        <begin position="693"/>
        <end position="843"/>
    </location>
</feature>
<feature type="region of interest" description="V1" evidence="1">
    <location>
        <begin position="132"/>
        <end position="156"/>
    </location>
</feature>
<feature type="region of interest" description="V2" evidence="1">
    <location>
        <begin position="157"/>
        <end position="196"/>
    </location>
</feature>
<feature type="region of interest" description="V3" evidence="1">
    <location>
        <begin position="296"/>
        <end position="329"/>
    </location>
</feature>
<feature type="region of interest" description="CD4-binding loop" evidence="1">
    <location>
        <begin position="361"/>
        <end position="371"/>
    </location>
</feature>
<feature type="region of interest" description="V4" evidence="1">
    <location>
        <begin position="382"/>
        <end position="405"/>
    </location>
</feature>
<feature type="region of interest" description="V5">
    <location>
        <begin position="448"/>
        <end position="458"/>
    </location>
</feature>
<feature type="region of interest" description="V5" evidence="1">
    <location>
        <begin position="450"/>
        <end position="458"/>
    </location>
</feature>
<feature type="region of interest" description="Fusion peptide" evidence="1">
    <location>
        <begin position="499"/>
        <end position="519"/>
    </location>
</feature>
<feature type="region of interest" description="Immunosuppression" evidence="1">
    <location>
        <begin position="561"/>
        <end position="579"/>
    </location>
</feature>
<feature type="region of interest" description="MPER; binding to GalCer" evidence="1">
    <location>
        <begin position="649"/>
        <end position="670"/>
    </location>
</feature>
<feature type="region of interest" description="Disordered" evidence="2">
    <location>
        <begin position="709"/>
        <end position="731"/>
    </location>
</feature>
<feature type="coiled-coil region" evidence="1">
    <location>
        <begin position="620"/>
        <end position="654"/>
    </location>
</feature>
<feature type="short sequence motif" description="YXXL motif; contains endocytosis signal" evidence="1">
    <location>
        <begin position="699"/>
        <end position="702"/>
    </location>
</feature>
<feature type="short sequence motif" description="Di-leucine internalization motif" evidence="1">
    <location>
        <begin position="842"/>
        <end position="843"/>
    </location>
</feature>
<feature type="site" description="Cleavage; by host furin" evidence="1">
    <location>
        <begin position="498"/>
        <end position="499"/>
    </location>
</feature>
<feature type="lipid moiety-binding region" description="S-palmitoyl cysteine; by host" evidence="1">
    <location>
        <position position="751"/>
    </location>
</feature>
<feature type="glycosylation site" description="N-linked (GlcNAc...) asparagine; by host" evidence="1">
    <location>
        <position position="30"/>
    </location>
</feature>
<feature type="glycosylation site" description="N-linked (GlcNAc...) asparagine; by host" evidence="1">
    <location>
        <position position="89"/>
    </location>
</feature>
<feature type="glycosylation site" description="N-linked (GlcNAc...) asparagine; by host" evidence="1">
    <location>
        <position position="131"/>
    </location>
</feature>
<feature type="glycosylation site" description="N-linked (GlcNAc...) asparagine; by host" evidence="1">
    <location>
        <position position="136"/>
    </location>
</feature>
<feature type="glycosylation site" description="N-linked (GlcNAc...) asparagine; by host" evidence="1">
    <location>
        <position position="143"/>
    </location>
</feature>
<feature type="glycosylation site" description="N-linked (GlcNAc...) asparagine; by host" evidence="1">
    <location>
        <position position="156"/>
    </location>
</feature>
<feature type="glycosylation site" description="N-linked (GlcNAc...) asparagine; by host" evidence="1">
    <location>
        <position position="160"/>
    </location>
</feature>
<feature type="glycosylation site" description="N-linked (GlcNAc...) asparagine; by host" evidence="1">
    <location>
        <position position="186"/>
    </location>
</feature>
<feature type="glycosylation site" description="N-linked (GlcNAc...) asparagine; by host" evidence="1">
    <location>
        <position position="197"/>
    </location>
</feature>
<feature type="glycosylation site" description="N-linked (GlcNAc...) asparagine; by host" evidence="1">
    <location>
        <position position="234"/>
    </location>
</feature>
<feature type="glycosylation site" description="N-linked (GlcNAc...) asparagine; by host" evidence="1">
    <location>
        <position position="262"/>
    </location>
</feature>
<feature type="glycosylation site" description="N-linked (GlcNAc...) asparagine; by host" evidence="1">
    <location>
        <position position="276"/>
    </location>
</feature>
<feature type="glycosylation site" description="N-linked (GlcNAc...) asparagine; by host" evidence="1">
    <location>
        <position position="289"/>
    </location>
</feature>
<feature type="glycosylation site" description="N-linked (GlcNAc...) asparagine; by host" evidence="1">
    <location>
        <position position="301"/>
    </location>
</feature>
<feature type="glycosylation site" description="N-linked (GlcNAc...) asparagine; by host" evidence="1">
    <location>
        <position position="333"/>
    </location>
</feature>
<feature type="glycosylation site" description="N-linked (GlcNAc...) asparagine; by host" evidence="1">
    <location>
        <position position="338"/>
    </location>
</feature>
<feature type="glycosylation site" description="N-linked (GlcNAc...) asparagine; by host" evidence="1">
    <location>
        <position position="343"/>
    </location>
</feature>
<feature type="glycosylation site" description="N-linked (GlcNAc...) asparagine; by host" evidence="1">
    <location>
        <position position="353"/>
    </location>
</feature>
<feature type="glycosylation site" description="N-linked (GlcNAc...) asparagine; by host" evidence="1">
    <location>
        <position position="359"/>
    </location>
</feature>
<feature type="glycosylation site" description="N-linked (GlcNAc...) asparagine; by host" evidence="1">
    <location>
        <position position="383"/>
    </location>
</feature>
<feature type="glycosylation site" description="N-linked (GlcNAc...) asparagine; by host" evidence="1">
    <location>
        <position position="389"/>
    </location>
</feature>
<feature type="glycosylation site" description="N-linked (GlcNAc...) asparagine; by host" evidence="1">
    <location>
        <position position="395"/>
    </location>
</feature>
<feature type="glycosylation site" description="N-linked (GlcNAc...) asparagine; by host" evidence="1">
    <location>
        <position position="400"/>
    </location>
</feature>
<feature type="glycosylation site" description="N-linked (GlcNAc...) asparagine; by host" evidence="1">
    <location>
        <position position="435"/>
    </location>
</feature>
<feature type="glycosylation site" description="N-linked (GlcNAc...) asparagine; by host" evidence="1">
    <location>
        <position position="598"/>
    </location>
</feature>
<feature type="glycosylation site" description="N-linked (GlcNAc...) asparagine; by host" evidence="1">
    <location>
        <position position="603"/>
    </location>
</feature>
<feature type="glycosylation site" description="N-linked (GlcNAc...) asparagine; by host" evidence="1">
    <location>
        <position position="612"/>
    </location>
</feature>
<feature type="glycosylation site" description="N-linked (GlcNAc...) asparagine; by host" evidence="1">
    <location>
        <position position="624"/>
    </location>
</feature>
<feature type="disulfide bond" evidence="1">
    <location>
        <begin position="55"/>
        <end position="75"/>
    </location>
</feature>
<feature type="disulfide bond" evidence="1">
    <location>
        <begin position="120"/>
        <end position="205"/>
    </location>
</feature>
<feature type="disulfide bond" evidence="1">
    <location>
        <begin position="127"/>
        <end position="196"/>
    </location>
</feature>
<feature type="disulfide bond" evidence="1">
    <location>
        <begin position="132"/>
        <end position="157"/>
    </location>
</feature>
<feature type="disulfide bond" evidence="1">
    <location>
        <begin position="218"/>
        <end position="247"/>
    </location>
</feature>
<feature type="disulfide bond" evidence="1">
    <location>
        <begin position="228"/>
        <end position="239"/>
    </location>
</feature>
<feature type="disulfide bond" evidence="1">
    <location>
        <begin position="296"/>
        <end position="330"/>
    </location>
</feature>
<feature type="disulfide bond" evidence="1">
    <location>
        <begin position="375"/>
        <end position="432"/>
    </location>
</feature>
<feature type="disulfide bond" evidence="1">
    <location>
        <begin position="585"/>
        <end position="591"/>
    </location>
</feature>